<keyword id="KW-0131">Cell cycle</keyword>
<keyword id="KW-0132">Cell division</keyword>
<keyword id="KW-1185">Reference proteome</keyword>
<keyword id="KW-0717">Septation</keyword>
<name>MINC_PELTS</name>
<organism>
    <name type="scientific">Pelotomaculum thermopropionicum (strain DSM 13744 / JCM 10971 / SI)</name>
    <dbReference type="NCBI Taxonomy" id="370438"/>
    <lineage>
        <taxon>Bacteria</taxon>
        <taxon>Bacillati</taxon>
        <taxon>Bacillota</taxon>
        <taxon>Clostridia</taxon>
        <taxon>Eubacteriales</taxon>
        <taxon>Desulfotomaculaceae</taxon>
        <taxon>Pelotomaculum</taxon>
    </lineage>
</organism>
<protein>
    <recommendedName>
        <fullName evidence="1">Probable septum site-determining protein MinC</fullName>
    </recommendedName>
</protein>
<sequence>MSREMISIKGTRNGLVFFLDPTREFEEIKNTLLSKMESARGFFKGAKFSISHGQKDMPVEQKNELVNICRRYGLIPNNDDAAVPANAVSKASPRATRAASNSKPTIGENALMVRRSLRSGQCISYPGHVVVIGDVHPGAEVISGGNVLVMGSCRGLIHAGAGGNLMAKVVALRLAPTVLSIAGQRYAPEHPSAIPPGCQVARLSGQEIIFEKFQAAR</sequence>
<proteinExistence type="inferred from homology"/>
<accession>A5D2M7</accession>
<gene>
    <name evidence="1" type="primary">minC</name>
    <name type="ordered locus">PTH_1330</name>
</gene>
<reference key="1">
    <citation type="journal article" date="2008" name="Genome Res.">
        <title>The genome of Pelotomaculum thermopropionicum reveals niche-associated evolution in anaerobic microbiota.</title>
        <authorList>
            <person name="Kosaka T."/>
            <person name="Kato S."/>
            <person name="Shimoyama T."/>
            <person name="Ishii S."/>
            <person name="Abe T."/>
            <person name="Watanabe K."/>
        </authorList>
    </citation>
    <scope>NUCLEOTIDE SEQUENCE [LARGE SCALE GENOMIC DNA]</scope>
    <source>
        <strain>DSM 13744 / JCM 10971 / SI</strain>
    </source>
</reference>
<feature type="chain" id="PRO_1000078654" description="Probable septum site-determining protein MinC">
    <location>
        <begin position="1"/>
        <end position="217"/>
    </location>
</feature>
<evidence type="ECO:0000255" key="1">
    <source>
        <dbReference type="HAMAP-Rule" id="MF_00267"/>
    </source>
</evidence>
<comment type="function">
    <text evidence="1">Cell division inhibitor that blocks the formation of polar Z ring septums. Rapidly oscillates between the poles of the cell to destabilize FtsZ filaments that have formed before they mature into polar Z rings. Prevents FtsZ polymerization.</text>
</comment>
<comment type="subunit">
    <text evidence="1">Interacts with MinD and FtsZ.</text>
</comment>
<comment type="similarity">
    <text evidence="1">Belongs to the MinC family.</text>
</comment>
<dbReference type="EMBL" id="AP009389">
    <property type="protein sequence ID" value="BAF59511.1"/>
    <property type="molecule type" value="Genomic_DNA"/>
</dbReference>
<dbReference type="SMR" id="A5D2M7"/>
<dbReference type="STRING" id="370438.PTH_1330"/>
<dbReference type="KEGG" id="pth:PTH_1330"/>
<dbReference type="eggNOG" id="COG0850">
    <property type="taxonomic scope" value="Bacteria"/>
</dbReference>
<dbReference type="HOGENOM" id="CLU_048711_2_0_9"/>
<dbReference type="Proteomes" id="UP000006556">
    <property type="component" value="Chromosome"/>
</dbReference>
<dbReference type="GO" id="GO:0000902">
    <property type="term" value="P:cell morphogenesis"/>
    <property type="evidence" value="ECO:0007669"/>
    <property type="project" value="InterPro"/>
</dbReference>
<dbReference type="GO" id="GO:0000917">
    <property type="term" value="P:division septum assembly"/>
    <property type="evidence" value="ECO:0007669"/>
    <property type="project" value="UniProtKB-KW"/>
</dbReference>
<dbReference type="GO" id="GO:0051302">
    <property type="term" value="P:regulation of cell division"/>
    <property type="evidence" value="ECO:0007669"/>
    <property type="project" value="InterPro"/>
</dbReference>
<dbReference type="GO" id="GO:1901891">
    <property type="term" value="P:regulation of cell septum assembly"/>
    <property type="evidence" value="ECO:0007669"/>
    <property type="project" value="InterPro"/>
</dbReference>
<dbReference type="Gene3D" id="2.160.20.70">
    <property type="match status" value="1"/>
</dbReference>
<dbReference type="Gene3D" id="3.30.160.540">
    <property type="match status" value="1"/>
</dbReference>
<dbReference type="HAMAP" id="MF_00267">
    <property type="entry name" value="MinC"/>
    <property type="match status" value="1"/>
</dbReference>
<dbReference type="InterPro" id="IPR016098">
    <property type="entry name" value="CAP/MinC_C"/>
</dbReference>
<dbReference type="InterPro" id="IPR013033">
    <property type="entry name" value="MinC"/>
</dbReference>
<dbReference type="InterPro" id="IPR036145">
    <property type="entry name" value="MinC_C_sf"/>
</dbReference>
<dbReference type="InterPro" id="IPR007874">
    <property type="entry name" value="MinC_N"/>
</dbReference>
<dbReference type="InterPro" id="IPR005526">
    <property type="entry name" value="Septum_form_inhib_MinC_C"/>
</dbReference>
<dbReference type="NCBIfam" id="TIGR01222">
    <property type="entry name" value="minC"/>
    <property type="match status" value="1"/>
</dbReference>
<dbReference type="PANTHER" id="PTHR34108">
    <property type="entry name" value="SEPTUM SITE-DETERMINING PROTEIN MINC"/>
    <property type="match status" value="1"/>
</dbReference>
<dbReference type="PANTHER" id="PTHR34108:SF1">
    <property type="entry name" value="SEPTUM SITE-DETERMINING PROTEIN MINC"/>
    <property type="match status" value="1"/>
</dbReference>
<dbReference type="Pfam" id="PF03775">
    <property type="entry name" value="MinC_C"/>
    <property type="match status" value="1"/>
</dbReference>
<dbReference type="Pfam" id="PF05209">
    <property type="entry name" value="MinC_N"/>
    <property type="match status" value="1"/>
</dbReference>
<dbReference type="SUPFAM" id="SSF63848">
    <property type="entry name" value="Cell-division inhibitor MinC, C-terminal domain"/>
    <property type="match status" value="1"/>
</dbReference>